<name>LGT_ECOLU</name>
<sequence length="291" mass="33108">MTSSYLHFPEFDPVIFSIGPVALHWYGLMYLVGFIFAMWLATRRANRPGSGWTKNEVENLLYAGFLGVFLGGRIGYVLFYNFPQFMADPLYLFRVWDGGMSFHGGLIGVIVVMIIFARRTKRSFFQVSDFIAPLIPFGLGAGRLGNFINGELWGRVDPNFPFAMLFPGSRTEDILLLQTNPQWQSIFDTYGVLPRHPSQLYELLLEGVVLFIILNLYIRKPRPMGAVSGLFLIGYGAFRIIVEFFRQPDAQFTGAWVQYISMGQILSIPMIVAGVIMMVWAYRRSPQQHVS</sequence>
<feature type="chain" id="PRO_1000137425" description="Phosphatidylglycerol--prolipoprotein diacylglyceryl transferase">
    <location>
        <begin position="1"/>
        <end position="291"/>
    </location>
</feature>
<feature type="transmembrane region" description="Helical" evidence="1">
    <location>
        <begin position="21"/>
        <end position="41"/>
    </location>
</feature>
<feature type="transmembrane region" description="Helical" evidence="1">
    <location>
        <begin position="60"/>
        <end position="80"/>
    </location>
</feature>
<feature type="transmembrane region" description="Helical" evidence="1">
    <location>
        <begin position="96"/>
        <end position="116"/>
    </location>
</feature>
<feature type="transmembrane region" description="Helical" evidence="1">
    <location>
        <begin position="225"/>
        <end position="245"/>
    </location>
</feature>
<feature type="transmembrane region" description="Helical" evidence="1">
    <location>
        <begin position="260"/>
        <end position="280"/>
    </location>
</feature>
<feature type="binding site" evidence="1">
    <location>
        <position position="143"/>
    </location>
    <ligand>
        <name>a 1,2-diacyl-sn-glycero-3-phospho-(1'-sn-glycerol)</name>
        <dbReference type="ChEBI" id="CHEBI:64716"/>
    </ligand>
</feature>
<dbReference type="EC" id="2.5.1.145" evidence="1"/>
<dbReference type="EMBL" id="CU928163">
    <property type="protein sequence ID" value="CAR14321.1"/>
    <property type="molecule type" value="Genomic_DNA"/>
</dbReference>
<dbReference type="RefSeq" id="WP_000204658.1">
    <property type="nucleotide sequence ID" value="NC_011751.1"/>
</dbReference>
<dbReference type="RefSeq" id="YP_002413841.1">
    <property type="nucleotide sequence ID" value="NC_011751.1"/>
</dbReference>
<dbReference type="SMR" id="B7N760"/>
<dbReference type="STRING" id="585056.ECUMN_3155"/>
<dbReference type="GeneID" id="93779170"/>
<dbReference type="KEGG" id="eum:ECUMN_3155"/>
<dbReference type="PATRIC" id="fig|585056.7.peg.3337"/>
<dbReference type="HOGENOM" id="CLU_013386_1_0_6"/>
<dbReference type="UniPathway" id="UPA00664"/>
<dbReference type="Proteomes" id="UP000007097">
    <property type="component" value="Chromosome"/>
</dbReference>
<dbReference type="GO" id="GO:0005886">
    <property type="term" value="C:plasma membrane"/>
    <property type="evidence" value="ECO:0007669"/>
    <property type="project" value="UniProtKB-SubCell"/>
</dbReference>
<dbReference type="GO" id="GO:0008961">
    <property type="term" value="F:phosphatidylglycerol-prolipoprotein diacylglyceryl transferase activity"/>
    <property type="evidence" value="ECO:0007669"/>
    <property type="project" value="UniProtKB-UniRule"/>
</dbReference>
<dbReference type="GO" id="GO:0042158">
    <property type="term" value="P:lipoprotein biosynthetic process"/>
    <property type="evidence" value="ECO:0007669"/>
    <property type="project" value="UniProtKB-UniRule"/>
</dbReference>
<dbReference type="HAMAP" id="MF_01147">
    <property type="entry name" value="Lgt"/>
    <property type="match status" value="1"/>
</dbReference>
<dbReference type="InterPro" id="IPR001640">
    <property type="entry name" value="Lgt"/>
</dbReference>
<dbReference type="NCBIfam" id="TIGR00544">
    <property type="entry name" value="lgt"/>
    <property type="match status" value="1"/>
</dbReference>
<dbReference type="PANTHER" id="PTHR30589:SF0">
    <property type="entry name" value="PHOSPHATIDYLGLYCEROL--PROLIPOPROTEIN DIACYLGLYCERYL TRANSFERASE"/>
    <property type="match status" value="1"/>
</dbReference>
<dbReference type="PANTHER" id="PTHR30589">
    <property type="entry name" value="PROLIPOPROTEIN DIACYLGLYCERYL TRANSFERASE"/>
    <property type="match status" value="1"/>
</dbReference>
<dbReference type="Pfam" id="PF01790">
    <property type="entry name" value="LGT"/>
    <property type="match status" value="1"/>
</dbReference>
<dbReference type="PROSITE" id="PS01311">
    <property type="entry name" value="LGT"/>
    <property type="match status" value="1"/>
</dbReference>
<comment type="function">
    <text evidence="1">Catalyzes the transfer of the diacylglyceryl group from phosphatidylglycerol to the sulfhydryl group of the N-terminal cysteine of a prolipoprotein, the first step in the formation of mature lipoproteins.</text>
</comment>
<comment type="catalytic activity">
    <reaction evidence="1">
        <text>L-cysteinyl-[prolipoprotein] + a 1,2-diacyl-sn-glycero-3-phospho-(1'-sn-glycerol) = an S-1,2-diacyl-sn-glyceryl-L-cysteinyl-[prolipoprotein] + sn-glycerol 1-phosphate + H(+)</text>
        <dbReference type="Rhea" id="RHEA:56712"/>
        <dbReference type="Rhea" id="RHEA-COMP:14679"/>
        <dbReference type="Rhea" id="RHEA-COMP:14680"/>
        <dbReference type="ChEBI" id="CHEBI:15378"/>
        <dbReference type="ChEBI" id="CHEBI:29950"/>
        <dbReference type="ChEBI" id="CHEBI:57685"/>
        <dbReference type="ChEBI" id="CHEBI:64716"/>
        <dbReference type="ChEBI" id="CHEBI:140658"/>
        <dbReference type="EC" id="2.5.1.145"/>
    </reaction>
</comment>
<comment type="pathway">
    <text evidence="1">Protein modification; lipoprotein biosynthesis (diacylglyceryl transfer).</text>
</comment>
<comment type="subcellular location">
    <subcellularLocation>
        <location evidence="1">Cell inner membrane</location>
        <topology evidence="1">Multi-pass membrane protein</topology>
    </subcellularLocation>
</comment>
<comment type="similarity">
    <text evidence="1">Belongs to the Lgt family.</text>
</comment>
<keyword id="KW-0997">Cell inner membrane</keyword>
<keyword id="KW-1003">Cell membrane</keyword>
<keyword id="KW-0472">Membrane</keyword>
<keyword id="KW-0808">Transferase</keyword>
<keyword id="KW-0812">Transmembrane</keyword>
<keyword id="KW-1133">Transmembrane helix</keyword>
<organism>
    <name type="scientific">Escherichia coli O17:K52:H18 (strain UMN026 / ExPEC)</name>
    <dbReference type="NCBI Taxonomy" id="585056"/>
    <lineage>
        <taxon>Bacteria</taxon>
        <taxon>Pseudomonadati</taxon>
        <taxon>Pseudomonadota</taxon>
        <taxon>Gammaproteobacteria</taxon>
        <taxon>Enterobacterales</taxon>
        <taxon>Enterobacteriaceae</taxon>
        <taxon>Escherichia</taxon>
    </lineage>
</organism>
<protein>
    <recommendedName>
        <fullName evidence="1">Phosphatidylglycerol--prolipoprotein diacylglyceryl transferase</fullName>
        <ecNumber evidence="1">2.5.1.145</ecNumber>
    </recommendedName>
</protein>
<accession>B7N760</accession>
<reference key="1">
    <citation type="journal article" date="2009" name="PLoS Genet.">
        <title>Organised genome dynamics in the Escherichia coli species results in highly diverse adaptive paths.</title>
        <authorList>
            <person name="Touchon M."/>
            <person name="Hoede C."/>
            <person name="Tenaillon O."/>
            <person name="Barbe V."/>
            <person name="Baeriswyl S."/>
            <person name="Bidet P."/>
            <person name="Bingen E."/>
            <person name="Bonacorsi S."/>
            <person name="Bouchier C."/>
            <person name="Bouvet O."/>
            <person name="Calteau A."/>
            <person name="Chiapello H."/>
            <person name="Clermont O."/>
            <person name="Cruveiller S."/>
            <person name="Danchin A."/>
            <person name="Diard M."/>
            <person name="Dossat C."/>
            <person name="Karoui M.E."/>
            <person name="Frapy E."/>
            <person name="Garry L."/>
            <person name="Ghigo J.M."/>
            <person name="Gilles A.M."/>
            <person name="Johnson J."/>
            <person name="Le Bouguenec C."/>
            <person name="Lescat M."/>
            <person name="Mangenot S."/>
            <person name="Martinez-Jehanne V."/>
            <person name="Matic I."/>
            <person name="Nassif X."/>
            <person name="Oztas S."/>
            <person name="Petit M.A."/>
            <person name="Pichon C."/>
            <person name="Rouy Z."/>
            <person name="Ruf C.S."/>
            <person name="Schneider D."/>
            <person name="Tourret J."/>
            <person name="Vacherie B."/>
            <person name="Vallenet D."/>
            <person name="Medigue C."/>
            <person name="Rocha E.P.C."/>
            <person name="Denamur E."/>
        </authorList>
    </citation>
    <scope>NUCLEOTIDE SEQUENCE [LARGE SCALE GENOMIC DNA]</scope>
    <source>
        <strain>UMN026 / ExPEC</strain>
    </source>
</reference>
<gene>
    <name evidence="1" type="primary">lgt</name>
    <name type="ordered locus">ECUMN_3155</name>
</gene>
<evidence type="ECO:0000255" key="1">
    <source>
        <dbReference type="HAMAP-Rule" id="MF_01147"/>
    </source>
</evidence>
<proteinExistence type="inferred from homology"/>